<gene>
    <name evidence="1" type="primary">NCS6</name>
    <name evidence="1" type="synonym">CTU1</name>
    <name type="ORF">PGUG_05255</name>
</gene>
<proteinExistence type="inferred from homology"/>
<sequence length="369" mass="41532">MEEKKIRKVTLCDICHQSKAVMKRPKNLQKLCKECFYHVFETEIHNTIVDAQLFKPGDKVAIGASGGKDSTVLASVLKTLNEKYNYGLTLVLLSIDEGIVGYRDDSLATVKRNQIQYEMPLEIISYKDLYNWSMDEIVSCAGIRSSCTYCGVLRRQALDRGAAKLEIDHVVTGHNADDMAETVLMNLLRGDIARLERSCSILTSSEGSPIKRSKPFKYTYQKEIVLYAHYKKLDYFSTECSYAPEAFRGTARELLKALESVRPSCIMDIIYSGEHLVVAHKKKRTTEKYKNKPKKNIETEVNSDGSVNLTKKTDGSRCEKCGYLSSNKICKACVLLAGLEMNRPKVNIENNTAVEGSAKVMKTLEQLSF</sequence>
<evidence type="ECO:0000255" key="1">
    <source>
        <dbReference type="HAMAP-Rule" id="MF_03053"/>
    </source>
</evidence>
<organism>
    <name type="scientific">Meyerozyma guilliermondii (strain ATCC 6260 / CBS 566 / DSM 6381 / JCM 1539 / NBRC 10279 / NRRL Y-324)</name>
    <name type="common">Yeast</name>
    <name type="synonym">Candida guilliermondii</name>
    <dbReference type="NCBI Taxonomy" id="294746"/>
    <lineage>
        <taxon>Eukaryota</taxon>
        <taxon>Fungi</taxon>
        <taxon>Dikarya</taxon>
        <taxon>Ascomycota</taxon>
        <taxon>Saccharomycotina</taxon>
        <taxon>Pichiomycetes</taxon>
        <taxon>Debaryomycetaceae</taxon>
        <taxon>Meyerozyma</taxon>
    </lineage>
</organism>
<dbReference type="EC" id="2.7.7.-" evidence="1"/>
<dbReference type="EMBL" id="CH408161">
    <property type="protein sequence ID" value="EDK41157.2"/>
    <property type="molecule type" value="Genomic_DNA"/>
</dbReference>
<dbReference type="RefSeq" id="XP_001482235.1">
    <property type="nucleotide sequence ID" value="XM_001482185.1"/>
</dbReference>
<dbReference type="SMR" id="A5DPQ4"/>
<dbReference type="FunCoup" id="A5DPQ4">
    <property type="interactions" value="452"/>
</dbReference>
<dbReference type="STRING" id="294746.A5DPQ4"/>
<dbReference type="GeneID" id="5124374"/>
<dbReference type="KEGG" id="pgu:PGUG_05255"/>
<dbReference type="VEuPathDB" id="FungiDB:PGUG_05255"/>
<dbReference type="eggNOG" id="KOG2840">
    <property type="taxonomic scope" value="Eukaryota"/>
</dbReference>
<dbReference type="HOGENOM" id="CLU_026481_1_2_1"/>
<dbReference type="InParanoid" id="A5DPQ4"/>
<dbReference type="OMA" id="KPVRGIC"/>
<dbReference type="OrthoDB" id="198857at2759"/>
<dbReference type="UniPathway" id="UPA00988"/>
<dbReference type="Proteomes" id="UP000001997">
    <property type="component" value="Unassembled WGS sequence"/>
</dbReference>
<dbReference type="GO" id="GO:0005829">
    <property type="term" value="C:cytosol"/>
    <property type="evidence" value="ECO:0000250"/>
    <property type="project" value="UniProtKB"/>
</dbReference>
<dbReference type="GO" id="GO:0002144">
    <property type="term" value="C:cytosolic tRNA wobble base thiouridylase complex"/>
    <property type="evidence" value="ECO:0007669"/>
    <property type="project" value="EnsemblFungi"/>
</dbReference>
<dbReference type="GO" id="GO:0005739">
    <property type="term" value="C:mitochondrion"/>
    <property type="evidence" value="ECO:0007669"/>
    <property type="project" value="TreeGrafter"/>
</dbReference>
<dbReference type="GO" id="GO:0016779">
    <property type="term" value="F:nucleotidyltransferase activity"/>
    <property type="evidence" value="ECO:0007669"/>
    <property type="project" value="UniProtKB-UniRule"/>
</dbReference>
<dbReference type="GO" id="GO:0000049">
    <property type="term" value="F:tRNA binding"/>
    <property type="evidence" value="ECO:0000250"/>
    <property type="project" value="UniProtKB"/>
</dbReference>
<dbReference type="GO" id="GO:0103016">
    <property type="term" value="F:tRNA-uridine 2-sulfurtransferase activity"/>
    <property type="evidence" value="ECO:0007669"/>
    <property type="project" value="EnsemblFungi"/>
</dbReference>
<dbReference type="GO" id="GO:0032447">
    <property type="term" value="P:protein urmylation"/>
    <property type="evidence" value="ECO:0007669"/>
    <property type="project" value="UniProtKB-UniRule"/>
</dbReference>
<dbReference type="GO" id="GO:0034227">
    <property type="term" value="P:tRNA thio-modification"/>
    <property type="evidence" value="ECO:0000250"/>
    <property type="project" value="UniProtKB"/>
</dbReference>
<dbReference type="GO" id="GO:0002143">
    <property type="term" value="P:tRNA wobble position uridine thiolation"/>
    <property type="evidence" value="ECO:0007669"/>
    <property type="project" value="EnsemblFungi"/>
</dbReference>
<dbReference type="GO" id="GO:0002098">
    <property type="term" value="P:tRNA wobble uridine modification"/>
    <property type="evidence" value="ECO:0000250"/>
    <property type="project" value="UniProtKB"/>
</dbReference>
<dbReference type="CDD" id="cd01713">
    <property type="entry name" value="CTU1-like"/>
    <property type="match status" value="1"/>
</dbReference>
<dbReference type="FunFam" id="3.40.50.620:FF:000188">
    <property type="entry name" value="Cytoplasmic tRNA 2-thiolation protein 1"/>
    <property type="match status" value="1"/>
</dbReference>
<dbReference type="Gene3D" id="3.40.50.620">
    <property type="entry name" value="HUPs"/>
    <property type="match status" value="1"/>
</dbReference>
<dbReference type="HAMAP" id="MF_03053">
    <property type="entry name" value="CTU1"/>
    <property type="match status" value="1"/>
</dbReference>
<dbReference type="InterPro" id="IPR056369">
    <property type="entry name" value="CTU1-like_ATP-bd"/>
</dbReference>
<dbReference type="InterPro" id="IPR032442">
    <property type="entry name" value="CTU1_C"/>
</dbReference>
<dbReference type="InterPro" id="IPR000541">
    <property type="entry name" value="Ncs6/Tuc1/Ctu1"/>
</dbReference>
<dbReference type="InterPro" id="IPR014729">
    <property type="entry name" value="Rossmann-like_a/b/a_fold"/>
</dbReference>
<dbReference type="InterPro" id="IPR011063">
    <property type="entry name" value="TilS/TtcA_N"/>
</dbReference>
<dbReference type="InterPro" id="IPR035107">
    <property type="entry name" value="tRNA_thiolation_TtcA_Ctu1"/>
</dbReference>
<dbReference type="InterPro" id="IPR020554">
    <property type="entry name" value="UPF0021_CS"/>
</dbReference>
<dbReference type="PANTHER" id="PTHR11807">
    <property type="entry name" value="ATPASES OF THE PP SUPERFAMILY-RELATED"/>
    <property type="match status" value="1"/>
</dbReference>
<dbReference type="PANTHER" id="PTHR11807:SF12">
    <property type="entry name" value="CYTOPLASMIC TRNA 2-THIOLATION PROTEIN 1"/>
    <property type="match status" value="1"/>
</dbReference>
<dbReference type="Pfam" id="PF01171">
    <property type="entry name" value="ATP_bind_3"/>
    <property type="match status" value="1"/>
</dbReference>
<dbReference type="Pfam" id="PF16503">
    <property type="entry name" value="zn-ribbon_14"/>
    <property type="match status" value="1"/>
</dbReference>
<dbReference type="PIRSF" id="PIRSF004976">
    <property type="entry name" value="ATPase_YdaO"/>
    <property type="match status" value="1"/>
</dbReference>
<dbReference type="SUPFAM" id="SSF52402">
    <property type="entry name" value="Adenine nucleotide alpha hydrolases-like"/>
    <property type="match status" value="1"/>
</dbReference>
<dbReference type="PROSITE" id="PS01263">
    <property type="entry name" value="UPF0021"/>
    <property type="match status" value="1"/>
</dbReference>
<accession>A5DPQ4</accession>
<keyword id="KW-0963">Cytoplasm</keyword>
<keyword id="KW-1185">Reference proteome</keyword>
<keyword id="KW-0694">RNA-binding</keyword>
<keyword id="KW-0808">Transferase</keyword>
<keyword id="KW-0819">tRNA processing</keyword>
<keyword id="KW-0820">tRNA-binding</keyword>
<feature type="chain" id="PRO_0000368266" description="Cytoplasmic tRNA 2-thiolation protein 1">
    <location>
        <begin position="1"/>
        <end position="369"/>
    </location>
</feature>
<comment type="function">
    <text evidence="1">Plays a central role in 2-thiolation of mcm(5)S(2)U at tRNA wobble positions of tRNA(Lys), tRNA(Glu) and tRNA(Gln). Directly binds tRNAs and probably acts by catalyzing adenylation of tRNAs, an intermediate required for 2-thiolation. It is unclear whether it acts as a sulfurtransferase that transfers sulfur from thiocarboxylated URM1 onto the uridine of tRNAs at wobble position. Prior mcm(5) tRNA modification by the elongator complex is required for 2-thiolation. May also be involved in protein urmylation.</text>
</comment>
<comment type="pathway">
    <text evidence="1">tRNA modification; 5-methoxycarbonylmethyl-2-thiouridine-tRNA biosynthesis.</text>
</comment>
<comment type="subcellular location">
    <subcellularLocation>
        <location evidence="1">Cytoplasm</location>
    </subcellularLocation>
</comment>
<comment type="similarity">
    <text evidence="1">Belongs to the TtcA family. CTU1/NCS6/ATPBD3 subfamily.</text>
</comment>
<reference key="1">
    <citation type="journal article" date="2009" name="Nature">
        <title>Evolution of pathogenicity and sexual reproduction in eight Candida genomes.</title>
        <authorList>
            <person name="Butler G."/>
            <person name="Rasmussen M.D."/>
            <person name="Lin M.F."/>
            <person name="Santos M.A.S."/>
            <person name="Sakthikumar S."/>
            <person name="Munro C.A."/>
            <person name="Rheinbay E."/>
            <person name="Grabherr M."/>
            <person name="Forche A."/>
            <person name="Reedy J.L."/>
            <person name="Agrafioti I."/>
            <person name="Arnaud M.B."/>
            <person name="Bates S."/>
            <person name="Brown A.J.P."/>
            <person name="Brunke S."/>
            <person name="Costanzo M.C."/>
            <person name="Fitzpatrick D.A."/>
            <person name="de Groot P.W.J."/>
            <person name="Harris D."/>
            <person name="Hoyer L.L."/>
            <person name="Hube B."/>
            <person name="Klis F.M."/>
            <person name="Kodira C."/>
            <person name="Lennard N."/>
            <person name="Logue M.E."/>
            <person name="Martin R."/>
            <person name="Neiman A.M."/>
            <person name="Nikolaou E."/>
            <person name="Quail M.A."/>
            <person name="Quinn J."/>
            <person name="Santos M.C."/>
            <person name="Schmitzberger F.F."/>
            <person name="Sherlock G."/>
            <person name="Shah P."/>
            <person name="Silverstein K.A.T."/>
            <person name="Skrzypek M.S."/>
            <person name="Soll D."/>
            <person name="Staggs R."/>
            <person name="Stansfield I."/>
            <person name="Stumpf M.P.H."/>
            <person name="Sudbery P.E."/>
            <person name="Srikantha T."/>
            <person name="Zeng Q."/>
            <person name="Berman J."/>
            <person name="Berriman M."/>
            <person name="Heitman J."/>
            <person name="Gow N.A.R."/>
            <person name="Lorenz M.C."/>
            <person name="Birren B.W."/>
            <person name="Kellis M."/>
            <person name="Cuomo C.A."/>
        </authorList>
    </citation>
    <scope>NUCLEOTIDE SEQUENCE [LARGE SCALE GENOMIC DNA]</scope>
    <source>
        <strain>ATCC 6260 / CBS 566 / DSM 6381 / JCM 1539 / NBRC 10279 / NRRL Y-324</strain>
    </source>
</reference>
<name>CTU1_PICGU</name>
<protein>
    <recommendedName>
        <fullName evidence="1">Cytoplasmic tRNA 2-thiolation protein 1</fullName>
        <ecNumber evidence="1">2.7.7.-</ecNumber>
    </recommendedName>
    <alternativeName>
        <fullName evidence="1">Cytoplasmic tRNA adenylyltransferase 1</fullName>
    </alternativeName>
</protein>